<gene>
    <name type="ordered locus">At1g69290</name>
    <name type="ORF">F23O10.12</name>
    <name type="ORF">F23O10.28</name>
</gene>
<proteinExistence type="evidence at transcript level"/>
<feature type="chain" id="PRO_0000342851" description="Pentatricopeptide repeat-containing protein At1g69290">
    <location>
        <begin position="1"/>
        <end position="658"/>
    </location>
</feature>
<feature type="repeat" description="PPR 1">
    <location>
        <begin position="214"/>
        <end position="249"/>
    </location>
</feature>
<feature type="repeat" description="PPR 2">
    <location>
        <begin position="250"/>
        <end position="284"/>
    </location>
</feature>
<feature type="repeat" description="PPR 3">
    <location>
        <begin position="285"/>
        <end position="320"/>
    </location>
</feature>
<feature type="repeat" description="PPR 4">
    <location>
        <begin position="323"/>
        <end position="353"/>
    </location>
</feature>
<feature type="repeat" description="PPR 5">
    <location>
        <begin position="361"/>
        <end position="395"/>
    </location>
</feature>
<feature type="repeat" description="PPR 6">
    <location>
        <begin position="397"/>
        <end position="431"/>
    </location>
</feature>
<feature type="repeat" description="PPR 7">
    <location>
        <begin position="432"/>
        <end position="466"/>
    </location>
</feature>
<feature type="repeat" description="PPR 8">
    <location>
        <begin position="467"/>
        <end position="497"/>
    </location>
</feature>
<feature type="repeat" description="PPR 9">
    <location>
        <begin position="503"/>
        <end position="537"/>
    </location>
</feature>
<feature type="repeat" description="PPR 10">
    <location>
        <begin position="538"/>
        <end position="568"/>
    </location>
</feature>
<feature type="repeat" description="PPR 11">
    <location>
        <begin position="581"/>
        <end position="615"/>
    </location>
</feature>
<feature type="region of interest" description="Disordered" evidence="1">
    <location>
        <begin position="1"/>
        <end position="23"/>
    </location>
</feature>
<feature type="region of interest" description="Disordered" evidence="1">
    <location>
        <begin position="39"/>
        <end position="61"/>
    </location>
</feature>
<feature type="compositionally biased region" description="Polar residues" evidence="1">
    <location>
        <begin position="50"/>
        <end position="61"/>
    </location>
</feature>
<dbReference type="EMBL" id="AC018364">
    <property type="protein sequence ID" value="AAG52501.1"/>
    <property type="status" value="ALT_SEQ"/>
    <property type="molecule type" value="Genomic_DNA"/>
</dbReference>
<dbReference type="EMBL" id="CP002684">
    <property type="protein sequence ID" value="AEE34906.1"/>
    <property type="molecule type" value="Genomic_DNA"/>
</dbReference>
<dbReference type="PIR" id="A96717">
    <property type="entry name" value="A96717"/>
</dbReference>
<dbReference type="RefSeq" id="NP_177089.2">
    <property type="nucleotide sequence ID" value="NM_105596.2"/>
</dbReference>
<dbReference type="SMR" id="P0C7R4"/>
<dbReference type="FunCoup" id="P0C7R4">
    <property type="interactions" value="113"/>
</dbReference>
<dbReference type="STRING" id="3702.P0C7R4"/>
<dbReference type="PaxDb" id="3702-AT1G69290.1"/>
<dbReference type="ProteomicsDB" id="250576"/>
<dbReference type="EnsemblPlants" id="AT1G69290.1">
    <property type="protein sequence ID" value="AT1G69290.1"/>
    <property type="gene ID" value="AT1G69290"/>
</dbReference>
<dbReference type="GeneID" id="843260"/>
<dbReference type="Gramene" id="AT1G69290.1">
    <property type="protein sequence ID" value="AT1G69290.1"/>
    <property type="gene ID" value="AT1G69290"/>
</dbReference>
<dbReference type="KEGG" id="ath:AT1G69290"/>
<dbReference type="Araport" id="AT1G69290"/>
<dbReference type="TAIR" id="AT1G69290"/>
<dbReference type="eggNOG" id="ENOG502QSBB">
    <property type="taxonomic scope" value="Eukaryota"/>
</dbReference>
<dbReference type="HOGENOM" id="CLU_008969_1_1_1"/>
<dbReference type="InParanoid" id="P0C7R4"/>
<dbReference type="OMA" id="KCANTAA"/>
<dbReference type="PhylomeDB" id="P0C7R4"/>
<dbReference type="PRO" id="PR:P0C7R4"/>
<dbReference type="Proteomes" id="UP000006548">
    <property type="component" value="Chromosome 1"/>
</dbReference>
<dbReference type="ExpressionAtlas" id="P0C7R4">
    <property type="expression patterns" value="baseline and differential"/>
</dbReference>
<dbReference type="Gene3D" id="1.25.40.10">
    <property type="entry name" value="Tetratricopeptide repeat domain"/>
    <property type="match status" value="3"/>
</dbReference>
<dbReference type="InterPro" id="IPR002885">
    <property type="entry name" value="Pentatricopeptide_rpt"/>
</dbReference>
<dbReference type="InterPro" id="IPR011990">
    <property type="entry name" value="TPR-like_helical_dom_sf"/>
</dbReference>
<dbReference type="NCBIfam" id="TIGR00756">
    <property type="entry name" value="PPR"/>
    <property type="match status" value="1"/>
</dbReference>
<dbReference type="PANTHER" id="PTHR46598">
    <property type="entry name" value="BNAC05G43320D PROTEIN"/>
    <property type="match status" value="1"/>
</dbReference>
<dbReference type="PANTHER" id="PTHR46598:SF2">
    <property type="entry name" value="OS01G0788900 PROTEIN"/>
    <property type="match status" value="1"/>
</dbReference>
<dbReference type="Pfam" id="PF01535">
    <property type="entry name" value="PPR"/>
    <property type="match status" value="2"/>
</dbReference>
<dbReference type="Pfam" id="PF13041">
    <property type="entry name" value="PPR_2"/>
    <property type="match status" value="1"/>
</dbReference>
<dbReference type="Pfam" id="PF13812">
    <property type="entry name" value="PPR_3"/>
    <property type="match status" value="1"/>
</dbReference>
<dbReference type="Pfam" id="PF25245">
    <property type="entry name" value="TPR_At1g68980"/>
    <property type="match status" value="1"/>
</dbReference>
<dbReference type="PROSITE" id="PS51375">
    <property type="entry name" value="PPR"/>
    <property type="match status" value="9"/>
</dbReference>
<evidence type="ECO:0000256" key="1">
    <source>
        <dbReference type="SAM" id="MobiDB-lite"/>
    </source>
</evidence>
<evidence type="ECO:0000305" key="2"/>
<sequence length="658" mass="73890">MFRKTLNSISRRHFSSSSPESPSLYSFLKPSLFSHKPITLSPSLSPPQNPKTLTPDQKSSFESTLHDSLNAHYTDEAWKAFRSLTAASSLPEKRLINSLITHLSGVEGSGESISHRLKRAFASAAYVIEKDPILLEFETVRTLLESMKLAKAAGPALALVKCMFKNRYFVPFDLWGHLVIDICRENGSLAPFLKVFKESCRISVDEKLEFMKPDLVASNAALEACCRQMESLADAENVIESMAVLGVKPDELSFGFLAYLYARKGLREKISELENLMDGFGFASRRILYSNMISGYVKSGDLDSVSDVILHSLKEGGEESSFSVETYCELVKGFIESKSVKSLAKVILEAQKLESSYVGVDSSVGFGIINACVNLGFSDKAHSILEEMIAQGGGSVGIGVYVPILKAYCKEYRTAEATQLVTEISSSGLQLDVEISNALIEASMTNQDFISAFTLFRDMRENRVVDLKGSYLTIMTGLLENQRPELMAAFLDEVVEDPRVEVNSHDWNSIIHAFCKSGRLEDARRTFRRMVFLRYEPNNQTYLSLINGYVSGEKYFNVLLLWNEIKGKISSVEAEKRSRLDHALVDAFLYALVKGGFFDAAMQVVEKSQEMKIFVDKWRYKQAFMETHKKLRLPKLRKRNYKKMESLVAFKNWAGLNT</sequence>
<accession>P0C7R4</accession>
<accession>Q9C982</accession>
<protein>
    <recommendedName>
        <fullName>Pentatricopeptide repeat-containing protein At1g69290</fullName>
    </recommendedName>
</protein>
<comment type="similarity">
    <text evidence="2">Belongs to the PPR family. P subfamily.</text>
</comment>
<comment type="sequence caution" evidence="2">
    <conflict type="erroneous gene model prediction">
        <sequence resource="EMBL-CDS" id="AAG52501"/>
    </conflict>
    <text>The predicted gene has been split into 2 genes: At1g69290 and At1g69295.</text>
</comment>
<comment type="online information" name="Pentatricopeptide repeat proteins">
    <link uri="https://ppr.plantenergy.uwa.edu.au"/>
</comment>
<name>PP110_ARATH</name>
<organism>
    <name type="scientific">Arabidopsis thaliana</name>
    <name type="common">Mouse-ear cress</name>
    <dbReference type="NCBI Taxonomy" id="3702"/>
    <lineage>
        <taxon>Eukaryota</taxon>
        <taxon>Viridiplantae</taxon>
        <taxon>Streptophyta</taxon>
        <taxon>Embryophyta</taxon>
        <taxon>Tracheophyta</taxon>
        <taxon>Spermatophyta</taxon>
        <taxon>Magnoliopsida</taxon>
        <taxon>eudicotyledons</taxon>
        <taxon>Gunneridae</taxon>
        <taxon>Pentapetalae</taxon>
        <taxon>rosids</taxon>
        <taxon>malvids</taxon>
        <taxon>Brassicales</taxon>
        <taxon>Brassicaceae</taxon>
        <taxon>Camelineae</taxon>
        <taxon>Arabidopsis</taxon>
    </lineage>
</organism>
<keyword id="KW-1185">Reference proteome</keyword>
<keyword id="KW-0677">Repeat</keyword>
<reference key="1">
    <citation type="journal article" date="2000" name="Nature">
        <title>Sequence and analysis of chromosome 1 of the plant Arabidopsis thaliana.</title>
        <authorList>
            <person name="Theologis A."/>
            <person name="Ecker J.R."/>
            <person name="Palm C.J."/>
            <person name="Federspiel N.A."/>
            <person name="Kaul S."/>
            <person name="White O."/>
            <person name="Alonso J."/>
            <person name="Altafi H."/>
            <person name="Araujo R."/>
            <person name="Bowman C.L."/>
            <person name="Brooks S.Y."/>
            <person name="Buehler E."/>
            <person name="Chan A."/>
            <person name="Chao Q."/>
            <person name="Chen H."/>
            <person name="Cheuk R.F."/>
            <person name="Chin C.W."/>
            <person name="Chung M.K."/>
            <person name="Conn L."/>
            <person name="Conway A.B."/>
            <person name="Conway A.R."/>
            <person name="Creasy T.H."/>
            <person name="Dewar K."/>
            <person name="Dunn P."/>
            <person name="Etgu P."/>
            <person name="Feldblyum T.V."/>
            <person name="Feng J.-D."/>
            <person name="Fong B."/>
            <person name="Fujii C.Y."/>
            <person name="Gill J.E."/>
            <person name="Goldsmith A.D."/>
            <person name="Haas B."/>
            <person name="Hansen N.F."/>
            <person name="Hughes B."/>
            <person name="Huizar L."/>
            <person name="Hunter J.L."/>
            <person name="Jenkins J."/>
            <person name="Johnson-Hopson C."/>
            <person name="Khan S."/>
            <person name="Khaykin E."/>
            <person name="Kim C.J."/>
            <person name="Koo H.L."/>
            <person name="Kremenetskaia I."/>
            <person name="Kurtz D.B."/>
            <person name="Kwan A."/>
            <person name="Lam B."/>
            <person name="Langin-Hooper S."/>
            <person name="Lee A."/>
            <person name="Lee J.M."/>
            <person name="Lenz C.A."/>
            <person name="Li J.H."/>
            <person name="Li Y.-P."/>
            <person name="Lin X."/>
            <person name="Liu S.X."/>
            <person name="Liu Z.A."/>
            <person name="Luros J.S."/>
            <person name="Maiti R."/>
            <person name="Marziali A."/>
            <person name="Militscher J."/>
            <person name="Miranda M."/>
            <person name="Nguyen M."/>
            <person name="Nierman W.C."/>
            <person name="Osborne B.I."/>
            <person name="Pai G."/>
            <person name="Peterson J."/>
            <person name="Pham P.K."/>
            <person name="Rizzo M."/>
            <person name="Rooney T."/>
            <person name="Rowley D."/>
            <person name="Sakano H."/>
            <person name="Salzberg S.L."/>
            <person name="Schwartz J.R."/>
            <person name="Shinn P."/>
            <person name="Southwick A.M."/>
            <person name="Sun H."/>
            <person name="Tallon L.J."/>
            <person name="Tambunga G."/>
            <person name="Toriumi M.J."/>
            <person name="Town C.D."/>
            <person name="Utterback T."/>
            <person name="Van Aken S."/>
            <person name="Vaysberg M."/>
            <person name="Vysotskaia V.S."/>
            <person name="Walker M."/>
            <person name="Wu D."/>
            <person name="Yu G."/>
            <person name="Fraser C.M."/>
            <person name="Venter J.C."/>
            <person name="Davis R.W."/>
        </authorList>
    </citation>
    <scope>NUCLEOTIDE SEQUENCE [LARGE SCALE GENOMIC DNA]</scope>
    <source>
        <strain>cv. Columbia</strain>
    </source>
</reference>
<reference key="2">
    <citation type="journal article" date="2017" name="Plant J.">
        <title>Araport11: a complete reannotation of the Arabidopsis thaliana reference genome.</title>
        <authorList>
            <person name="Cheng C.Y."/>
            <person name="Krishnakumar V."/>
            <person name="Chan A.P."/>
            <person name="Thibaud-Nissen F."/>
            <person name="Schobel S."/>
            <person name="Town C.D."/>
        </authorList>
    </citation>
    <scope>GENOME REANNOTATION</scope>
    <source>
        <strain>cv. Columbia</strain>
    </source>
</reference>
<reference key="3">
    <citation type="journal article" date="2004" name="Plant Cell">
        <title>Genome-wide analysis of Arabidopsis pentatricopeptide repeat proteins reveals their essential role in organelle biogenesis.</title>
        <authorList>
            <person name="Lurin C."/>
            <person name="Andres C."/>
            <person name="Aubourg S."/>
            <person name="Bellaoui M."/>
            <person name="Bitton F."/>
            <person name="Bruyere C."/>
            <person name="Caboche M."/>
            <person name="Debast C."/>
            <person name="Gualberto J."/>
            <person name="Hoffmann B."/>
            <person name="Lecharny A."/>
            <person name="Le Ret M."/>
            <person name="Martin-Magniette M.-L."/>
            <person name="Mireau H."/>
            <person name="Peeters N."/>
            <person name="Renou J.-P."/>
            <person name="Szurek B."/>
            <person name="Taconnat L."/>
            <person name="Small I."/>
        </authorList>
    </citation>
    <scope>GENE FAMILY</scope>
</reference>